<feature type="chain" id="PRO_0000092110" description="Energy-coupling factor transporter ATP-binding protein EcfA1">
    <location>
        <begin position="1"/>
        <end position="279"/>
    </location>
</feature>
<feature type="domain" description="ABC transporter" evidence="1">
    <location>
        <begin position="5"/>
        <end position="240"/>
    </location>
</feature>
<feature type="binding site" evidence="1">
    <location>
        <begin position="40"/>
        <end position="47"/>
    </location>
    <ligand>
        <name>ATP</name>
        <dbReference type="ChEBI" id="CHEBI:30616"/>
    </ligand>
</feature>
<accession>Q5X9B5</accession>
<keyword id="KW-0067">ATP-binding</keyword>
<keyword id="KW-1003">Cell membrane</keyword>
<keyword id="KW-0472">Membrane</keyword>
<keyword id="KW-0547">Nucleotide-binding</keyword>
<keyword id="KW-1278">Translocase</keyword>
<keyword id="KW-0813">Transport</keyword>
<reference key="1">
    <citation type="journal article" date="2004" name="J. Infect. Dis.">
        <title>Progress toward characterization of the group A Streptococcus metagenome: complete genome sequence of a macrolide-resistant serotype M6 strain.</title>
        <authorList>
            <person name="Banks D.J."/>
            <person name="Porcella S.F."/>
            <person name="Barbian K.D."/>
            <person name="Beres S.B."/>
            <person name="Philips L.E."/>
            <person name="Voyich J.M."/>
            <person name="DeLeo F.R."/>
            <person name="Martin J.M."/>
            <person name="Somerville G.A."/>
            <person name="Musser J.M."/>
        </authorList>
    </citation>
    <scope>NUCLEOTIDE SEQUENCE [LARGE SCALE GENOMIC DNA]</scope>
    <source>
        <strain>ATCC BAA-946 / MGAS10394</strain>
    </source>
</reference>
<proteinExistence type="inferred from homology"/>
<gene>
    <name evidence="1" type="primary">ecfA1</name>
    <name type="synonym">cbiO1</name>
    <name type="ordered locus">M6_Spy1863</name>
</gene>
<organism>
    <name type="scientific">Streptococcus pyogenes serotype M6 (strain ATCC BAA-946 / MGAS10394)</name>
    <dbReference type="NCBI Taxonomy" id="286636"/>
    <lineage>
        <taxon>Bacteria</taxon>
        <taxon>Bacillati</taxon>
        <taxon>Bacillota</taxon>
        <taxon>Bacilli</taxon>
        <taxon>Lactobacillales</taxon>
        <taxon>Streptococcaceae</taxon>
        <taxon>Streptococcus</taxon>
    </lineage>
</organism>
<name>ECFA1_STRP6</name>
<protein>
    <recommendedName>
        <fullName evidence="1">Energy-coupling factor transporter ATP-binding protein EcfA1</fullName>
        <shortName evidence="1">ECF transporter A component EcfA1</shortName>
        <ecNumber evidence="1">7.-.-.-</ecNumber>
    </recommendedName>
</protein>
<evidence type="ECO:0000255" key="1">
    <source>
        <dbReference type="HAMAP-Rule" id="MF_01710"/>
    </source>
</evidence>
<evidence type="ECO:0000305" key="2"/>
<dbReference type="EC" id="7.-.-.-" evidence="1"/>
<dbReference type="EMBL" id="CP000003">
    <property type="protein sequence ID" value="AAT87998.1"/>
    <property type="status" value="ALT_INIT"/>
    <property type="molecule type" value="Genomic_DNA"/>
</dbReference>
<dbReference type="RefSeq" id="WP_002992388.1">
    <property type="nucleotide sequence ID" value="NC_006086.1"/>
</dbReference>
<dbReference type="SMR" id="Q5X9B5"/>
<dbReference type="KEGG" id="spa:M6_Spy1863"/>
<dbReference type="HOGENOM" id="CLU_000604_1_22_9"/>
<dbReference type="Proteomes" id="UP000001167">
    <property type="component" value="Chromosome"/>
</dbReference>
<dbReference type="GO" id="GO:0043190">
    <property type="term" value="C:ATP-binding cassette (ABC) transporter complex"/>
    <property type="evidence" value="ECO:0007669"/>
    <property type="project" value="TreeGrafter"/>
</dbReference>
<dbReference type="GO" id="GO:0005524">
    <property type="term" value="F:ATP binding"/>
    <property type="evidence" value="ECO:0007669"/>
    <property type="project" value="UniProtKB-KW"/>
</dbReference>
<dbReference type="GO" id="GO:0016887">
    <property type="term" value="F:ATP hydrolysis activity"/>
    <property type="evidence" value="ECO:0007669"/>
    <property type="project" value="InterPro"/>
</dbReference>
<dbReference type="GO" id="GO:0042626">
    <property type="term" value="F:ATPase-coupled transmembrane transporter activity"/>
    <property type="evidence" value="ECO:0007669"/>
    <property type="project" value="TreeGrafter"/>
</dbReference>
<dbReference type="CDD" id="cd03225">
    <property type="entry name" value="ABC_cobalt_CbiO_domain1"/>
    <property type="match status" value="1"/>
</dbReference>
<dbReference type="FunFam" id="3.40.50.300:FF:000224">
    <property type="entry name" value="Energy-coupling factor transporter ATP-binding protein EcfA"/>
    <property type="match status" value="1"/>
</dbReference>
<dbReference type="Gene3D" id="3.40.50.300">
    <property type="entry name" value="P-loop containing nucleotide triphosphate hydrolases"/>
    <property type="match status" value="1"/>
</dbReference>
<dbReference type="InterPro" id="IPR003593">
    <property type="entry name" value="AAA+_ATPase"/>
</dbReference>
<dbReference type="InterPro" id="IPR003439">
    <property type="entry name" value="ABC_transporter-like_ATP-bd"/>
</dbReference>
<dbReference type="InterPro" id="IPR017871">
    <property type="entry name" value="ABC_transporter-like_CS"/>
</dbReference>
<dbReference type="InterPro" id="IPR015856">
    <property type="entry name" value="ABC_transpr_CbiO/EcfA_su"/>
</dbReference>
<dbReference type="InterPro" id="IPR050095">
    <property type="entry name" value="ECF_ABC_transporter_ATP-bd"/>
</dbReference>
<dbReference type="InterPro" id="IPR030947">
    <property type="entry name" value="EcfA_1"/>
</dbReference>
<dbReference type="InterPro" id="IPR027417">
    <property type="entry name" value="P-loop_NTPase"/>
</dbReference>
<dbReference type="NCBIfam" id="TIGR04520">
    <property type="entry name" value="ECF_ATPase_1"/>
    <property type="match status" value="1"/>
</dbReference>
<dbReference type="NCBIfam" id="NF010156">
    <property type="entry name" value="PRK13635.1"/>
    <property type="match status" value="1"/>
</dbReference>
<dbReference type="NCBIfam" id="NF010167">
    <property type="entry name" value="PRK13648.1"/>
    <property type="match status" value="1"/>
</dbReference>
<dbReference type="PANTHER" id="PTHR43553:SF24">
    <property type="entry name" value="ENERGY-COUPLING FACTOR TRANSPORTER ATP-BINDING PROTEIN ECFA1"/>
    <property type="match status" value="1"/>
</dbReference>
<dbReference type="PANTHER" id="PTHR43553">
    <property type="entry name" value="HEAVY METAL TRANSPORTER"/>
    <property type="match status" value="1"/>
</dbReference>
<dbReference type="Pfam" id="PF00005">
    <property type="entry name" value="ABC_tran"/>
    <property type="match status" value="1"/>
</dbReference>
<dbReference type="SMART" id="SM00382">
    <property type="entry name" value="AAA"/>
    <property type="match status" value="1"/>
</dbReference>
<dbReference type="SUPFAM" id="SSF52540">
    <property type="entry name" value="P-loop containing nucleoside triphosphate hydrolases"/>
    <property type="match status" value="1"/>
</dbReference>
<dbReference type="PROSITE" id="PS00211">
    <property type="entry name" value="ABC_TRANSPORTER_1"/>
    <property type="match status" value="1"/>
</dbReference>
<dbReference type="PROSITE" id="PS50893">
    <property type="entry name" value="ABC_TRANSPORTER_2"/>
    <property type="match status" value="1"/>
</dbReference>
<dbReference type="PROSITE" id="PS51246">
    <property type="entry name" value="CBIO"/>
    <property type="match status" value="1"/>
</dbReference>
<sequence>MSAIIELKKVTFNYHKDQEKPTLDGVSFHVKQGEWLSIIGHNGSGKSTTIRLIDGLLEPESGSIIVDGDLLTITNVWEIRHKIGMVFQNPDNQFVGATVEDDVAFGLENKGIAHEDIKERVNHALELVGMQNFKEKEPARLSGGQKQRVAIAGAVAMKPKIIILDEATSMLDPKGRLELIKTIKNIRDDYQLTVISITHDLDEVALSDRVLVMKDGQVESTSTPEQLFARGDELLQLGLDIPFTTSVVQMLQEEGYPIDYGYLTEKELENQLCQLISKM</sequence>
<comment type="function">
    <text evidence="1">ATP-binding (A) component of a common energy-coupling factor (ECF) ABC-transporter complex. Unlike classic ABC transporters this ECF transporter provides the energy necessary to transport a number of different substrates.</text>
</comment>
<comment type="subunit">
    <text evidence="1">Forms a stable energy-coupling factor (ECF) transporter complex composed of 2 membrane-embedded substrate-binding proteins (S component), 2 ATP-binding proteins (A component) and 2 transmembrane proteins (T component).</text>
</comment>
<comment type="subcellular location">
    <subcellularLocation>
        <location evidence="1">Cell membrane</location>
        <topology evidence="1">Peripheral membrane protein</topology>
    </subcellularLocation>
</comment>
<comment type="similarity">
    <text evidence="1">Belongs to the ABC transporter superfamily. Energy-coupling factor EcfA family.</text>
</comment>
<comment type="sequence caution" evidence="2">
    <conflict type="erroneous initiation">
        <sequence resource="EMBL-CDS" id="AAT87998"/>
    </conflict>
    <text>Extended N-terminus.</text>
</comment>